<feature type="chain" id="PRO_0000407613" description="Methionine aminopeptidase 2-1">
    <location>
        <begin position="1"/>
        <end position="452"/>
    </location>
</feature>
<feature type="region of interest" description="Disordered" evidence="2">
    <location>
        <begin position="1"/>
        <end position="100"/>
    </location>
</feature>
<feature type="compositionally biased region" description="Acidic residues" evidence="2">
    <location>
        <begin position="37"/>
        <end position="51"/>
    </location>
</feature>
<feature type="compositionally biased region" description="Basic residues" evidence="2">
    <location>
        <begin position="60"/>
        <end position="73"/>
    </location>
</feature>
<feature type="binding site" evidence="1">
    <location>
        <position position="205"/>
    </location>
    <ligand>
        <name>substrate</name>
    </ligand>
</feature>
<feature type="binding site" evidence="1">
    <location>
        <position position="225"/>
    </location>
    <ligand>
        <name>a divalent metal cation</name>
        <dbReference type="ChEBI" id="CHEBI:60240"/>
        <label>1</label>
    </ligand>
</feature>
<feature type="binding site" evidence="1">
    <location>
        <position position="236"/>
    </location>
    <ligand>
        <name>a divalent metal cation</name>
        <dbReference type="ChEBI" id="CHEBI:60240"/>
        <label>1</label>
    </ligand>
</feature>
<feature type="binding site" evidence="1">
    <location>
        <position position="236"/>
    </location>
    <ligand>
        <name>a divalent metal cation</name>
        <dbReference type="ChEBI" id="CHEBI:60240"/>
        <label>2</label>
        <note>catalytic</note>
    </ligand>
</feature>
<feature type="binding site" evidence="1">
    <location>
        <position position="305"/>
    </location>
    <ligand>
        <name>a divalent metal cation</name>
        <dbReference type="ChEBI" id="CHEBI:60240"/>
        <label>2</label>
        <note>catalytic</note>
    </ligand>
</feature>
<feature type="binding site" evidence="1">
    <location>
        <position position="313"/>
    </location>
    <ligand>
        <name>substrate</name>
    </ligand>
</feature>
<feature type="binding site" evidence="1">
    <location>
        <position position="338"/>
    </location>
    <ligand>
        <name>a divalent metal cation</name>
        <dbReference type="ChEBI" id="CHEBI:60240"/>
        <label>2</label>
        <note>catalytic</note>
    </ligand>
</feature>
<feature type="binding site" evidence="1">
    <location>
        <position position="433"/>
    </location>
    <ligand>
        <name>a divalent metal cation</name>
        <dbReference type="ChEBI" id="CHEBI:60240"/>
        <label>1</label>
    </ligand>
</feature>
<feature type="binding site" evidence="1">
    <location>
        <position position="433"/>
    </location>
    <ligand>
        <name>a divalent metal cation</name>
        <dbReference type="ChEBI" id="CHEBI:60240"/>
        <label>2</label>
        <note>catalytic</note>
    </ligand>
</feature>
<gene>
    <name type="ORF">PTT_01272</name>
</gene>
<sequence>MAAKVADDVANLKLDDSNTKPASGAAENGDKPTGDAEHDDSDDDNEAEDGAPEAGEGAAKKKKKRKPRKKKKAAGAAGAGGAKVQTAPPRVRIDEVFPNDSYPEGEIQEYVNENAYRTTNEEKRHLDRMNNDFLTEYRKGAEIHREVRQWAQKWIKPGMGLTEIAEGIEDSVRALTGHQGLGNGDAQIAGMGFPTGLSINHCAAHYTPNAGNKMVVNYEDVMKVDFGVHINGRIVDSAFTLTFDPVYDNLINACKAATNAGIKEAGIDVRMSDIGAAIQEVMESYEVEIKGEMLPVKCIRNLNGHSIGHYTIHGGKTVPIVKGGDQTKMEEGETFAIETFGSTGKGYVRDDMETSHYAMKADAPKVALRVSSAKTLLSSITKNFGTLPFCRRYLDRMGHDKYLLGLNNLVSAGIVEAYPPLCDIKGSYTAQSEHTFVLRPTCKEVLSRGDDY</sequence>
<dbReference type="EC" id="3.4.11.18" evidence="1"/>
<dbReference type="EMBL" id="GL531948">
    <property type="protein sequence ID" value="EFQ96410.1"/>
    <property type="molecule type" value="Genomic_DNA"/>
</dbReference>
<dbReference type="RefSeq" id="XP_003295492.1">
    <property type="nucleotide sequence ID" value="XM_003295444.1"/>
</dbReference>
<dbReference type="SMR" id="E3RCY7"/>
<dbReference type="STRING" id="861557.E3RCY7"/>
<dbReference type="EnsemblFungi" id="EFQ96410">
    <property type="protein sequence ID" value="EFQ96410"/>
    <property type="gene ID" value="PTT_01272"/>
</dbReference>
<dbReference type="KEGG" id="pte:PTT_01272"/>
<dbReference type="eggNOG" id="KOG2775">
    <property type="taxonomic scope" value="Eukaryota"/>
</dbReference>
<dbReference type="HOGENOM" id="CLU_015857_7_1_1"/>
<dbReference type="OrthoDB" id="7848262at2759"/>
<dbReference type="Proteomes" id="UP000001067">
    <property type="component" value="Unassembled WGS sequence"/>
</dbReference>
<dbReference type="GO" id="GO:0005737">
    <property type="term" value="C:cytoplasm"/>
    <property type="evidence" value="ECO:0007669"/>
    <property type="project" value="UniProtKB-SubCell"/>
</dbReference>
<dbReference type="GO" id="GO:0004239">
    <property type="term" value="F:initiator methionyl aminopeptidase activity"/>
    <property type="evidence" value="ECO:0007669"/>
    <property type="project" value="UniProtKB-UniRule"/>
</dbReference>
<dbReference type="GO" id="GO:0046872">
    <property type="term" value="F:metal ion binding"/>
    <property type="evidence" value="ECO:0007669"/>
    <property type="project" value="UniProtKB-UniRule"/>
</dbReference>
<dbReference type="GO" id="GO:0070006">
    <property type="term" value="F:metalloaminopeptidase activity"/>
    <property type="evidence" value="ECO:0007669"/>
    <property type="project" value="UniProtKB-UniRule"/>
</dbReference>
<dbReference type="GO" id="GO:0006508">
    <property type="term" value="P:proteolysis"/>
    <property type="evidence" value="ECO:0007669"/>
    <property type="project" value="UniProtKB-KW"/>
</dbReference>
<dbReference type="CDD" id="cd01088">
    <property type="entry name" value="MetAP2"/>
    <property type="match status" value="1"/>
</dbReference>
<dbReference type="Gene3D" id="3.90.230.10">
    <property type="entry name" value="Creatinase/methionine aminopeptidase superfamily"/>
    <property type="match status" value="1"/>
</dbReference>
<dbReference type="Gene3D" id="1.10.10.10">
    <property type="entry name" value="Winged helix-like DNA-binding domain superfamily/Winged helix DNA-binding domain"/>
    <property type="match status" value="1"/>
</dbReference>
<dbReference type="HAMAP" id="MF_03175">
    <property type="entry name" value="MetAP_2_euk"/>
    <property type="match status" value="1"/>
</dbReference>
<dbReference type="InterPro" id="IPR036005">
    <property type="entry name" value="Creatinase/aminopeptidase-like"/>
</dbReference>
<dbReference type="InterPro" id="IPR050247">
    <property type="entry name" value="Met_Aminopeptidase_Type2"/>
</dbReference>
<dbReference type="InterPro" id="IPR000994">
    <property type="entry name" value="Pept_M24"/>
</dbReference>
<dbReference type="InterPro" id="IPR001714">
    <property type="entry name" value="Pept_M24_MAP"/>
</dbReference>
<dbReference type="InterPro" id="IPR002468">
    <property type="entry name" value="Pept_M24A_MAP2"/>
</dbReference>
<dbReference type="InterPro" id="IPR018349">
    <property type="entry name" value="Pept_M24A_MAP2_BS"/>
</dbReference>
<dbReference type="InterPro" id="IPR036388">
    <property type="entry name" value="WH-like_DNA-bd_sf"/>
</dbReference>
<dbReference type="InterPro" id="IPR036390">
    <property type="entry name" value="WH_DNA-bd_sf"/>
</dbReference>
<dbReference type="NCBIfam" id="TIGR00501">
    <property type="entry name" value="met_pdase_II"/>
    <property type="match status" value="1"/>
</dbReference>
<dbReference type="PANTHER" id="PTHR45777">
    <property type="entry name" value="METHIONINE AMINOPEPTIDASE 2"/>
    <property type="match status" value="1"/>
</dbReference>
<dbReference type="PANTHER" id="PTHR45777:SF2">
    <property type="entry name" value="METHIONINE AMINOPEPTIDASE 2"/>
    <property type="match status" value="1"/>
</dbReference>
<dbReference type="Pfam" id="PF00557">
    <property type="entry name" value="Peptidase_M24"/>
    <property type="match status" value="1"/>
</dbReference>
<dbReference type="PRINTS" id="PR00599">
    <property type="entry name" value="MAPEPTIDASE"/>
</dbReference>
<dbReference type="SUPFAM" id="SSF55920">
    <property type="entry name" value="Creatinase/aminopeptidase"/>
    <property type="match status" value="1"/>
</dbReference>
<dbReference type="SUPFAM" id="SSF46785">
    <property type="entry name" value="Winged helix' DNA-binding domain"/>
    <property type="match status" value="1"/>
</dbReference>
<dbReference type="PROSITE" id="PS01202">
    <property type="entry name" value="MAP_2"/>
    <property type="match status" value="1"/>
</dbReference>
<proteinExistence type="inferred from homology"/>
<keyword id="KW-0031">Aminopeptidase</keyword>
<keyword id="KW-0963">Cytoplasm</keyword>
<keyword id="KW-0378">Hydrolase</keyword>
<keyword id="KW-0479">Metal-binding</keyword>
<keyword id="KW-0645">Protease</keyword>
<keyword id="KW-1185">Reference proteome</keyword>
<comment type="function">
    <text evidence="1">Cotranslationally removes the N-terminal methionine from nascent proteins. The N-terminal methionine is often cleaved when the second residue in the primary sequence is small and uncharged (Met-Ala-, Cys, Gly, Pro, Ser, Thr, or Val).</text>
</comment>
<comment type="catalytic activity">
    <reaction evidence="1">
        <text>Release of N-terminal amino acids, preferentially methionine, from peptides and arylamides.</text>
        <dbReference type="EC" id="3.4.11.18"/>
    </reaction>
</comment>
<comment type="cofactor">
    <cofactor evidence="1">
        <name>Co(2+)</name>
        <dbReference type="ChEBI" id="CHEBI:48828"/>
    </cofactor>
    <cofactor evidence="1">
        <name>Zn(2+)</name>
        <dbReference type="ChEBI" id="CHEBI:29105"/>
    </cofactor>
    <cofactor evidence="1">
        <name>Mn(2+)</name>
        <dbReference type="ChEBI" id="CHEBI:29035"/>
    </cofactor>
    <cofactor evidence="1">
        <name>Fe(2+)</name>
        <dbReference type="ChEBI" id="CHEBI:29033"/>
    </cofactor>
    <text evidence="1">Binds 2 divalent metal cations per subunit. Has a high-affinity and a low affinity metal-binding site. The true nature of the physiological cofactor is under debate. The enzyme is active with cobalt, zinc, manganese or divalent iron ions. Most likely, methionine aminopeptidases function as mononuclear Fe(2+)-metalloproteases under physiological conditions, and the catalytically relevant metal-binding site has been assigned to the histidine-containing high-affinity site.</text>
</comment>
<comment type="subcellular location">
    <subcellularLocation>
        <location evidence="1">Cytoplasm</location>
    </subcellularLocation>
</comment>
<comment type="similarity">
    <text evidence="1">Belongs to the peptidase M24A family. Methionine aminopeptidase eukaryotic type 2 subfamily.</text>
</comment>
<protein>
    <recommendedName>
        <fullName evidence="1">Methionine aminopeptidase 2-1</fullName>
        <shortName evidence="1">MAP 2-1</shortName>
        <shortName evidence="1">MetAP 2-1</shortName>
        <ecNumber evidence="1">3.4.11.18</ecNumber>
    </recommendedName>
    <alternativeName>
        <fullName evidence="1">Peptidase M</fullName>
    </alternativeName>
</protein>
<reference key="1">
    <citation type="journal article" date="2010" name="Genome Biol.">
        <title>A first genome assembly of the barley fungal pathogen Pyrenophora teres f. teres.</title>
        <authorList>
            <person name="Ellwood S.R."/>
            <person name="Liu Z."/>
            <person name="Syme R.A."/>
            <person name="Lai Z."/>
            <person name="Hane J.K."/>
            <person name="Keiper F."/>
            <person name="Moffat C.S."/>
            <person name="Oliver R.P."/>
            <person name="Friesen T.L."/>
        </authorList>
    </citation>
    <scope>NUCLEOTIDE SEQUENCE [LARGE SCALE GENOMIC DNA]</scope>
    <source>
        <strain>0-1</strain>
    </source>
</reference>
<evidence type="ECO:0000255" key="1">
    <source>
        <dbReference type="HAMAP-Rule" id="MF_03175"/>
    </source>
</evidence>
<evidence type="ECO:0000256" key="2">
    <source>
        <dbReference type="SAM" id="MobiDB-lite"/>
    </source>
</evidence>
<organism>
    <name type="scientific">Pyrenophora teres f. teres (strain 0-1)</name>
    <name type="common">Barley net blotch fungus</name>
    <name type="synonym">Drechslera teres f. teres</name>
    <dbReference type="NCBI Taxonomy" id="861557"/>
    <lineage>
        <taxon>Eukaryota</taxon>
        <taxon>Fungi</taxon>
        <taxon>Dikarya</taxon>
        <taxon>Ascomycota</taxon>
        <taxon>Pezizomycotina</taxon>
        <taxon>Dothideomycetes</taxon>
        <taxon>Pleosporomycetidae</taxon>
        <taxon>Pleosporales</taxon>
        <taxon>Pleosporineae</taxon>
        <taxon>Pleosporaceae</taxon>
        <taxon>Pyrenophora</taxon>
    </lineage>
</organism>
<accession>E3RCY7</accession>
<name>MAP21_PYRTT</name>